<dbReference type="EMBL" id="V01102">
    <property type="protein sequence ID" value="CAA24289.1"/>
    <property type="molecule type" value="Genomic_RNA"/>
</dbReference>
<dbReference type="EMBL" id="DQ508933">
    <property type="protein sequence ID" value="ABF21225.1"/>
    <property type="molecule type" value="Genomic_RNA"/>
</dbReference>
<dbReference type="PIR" id="A04094">
    <property type="entry name" value="MNIV2K"/>
</dbReference>
<dbReference type="SMR" id="P69258"/>
<dbReference type="IntAct" id="P69258">
    <property type="interactions" value="3"/>
</dbReference>
<dbReference type="Proteomes" id="UP000153055">
    <property type="component" value="Genome"/>
</dbReference>
<dbReference type="GO" id="GO:0042025">
    <property type="term" value="C:host cell nucleus"/>
    <property type="evidence" value="ECO:0007669"/>
    <property type="project" value="UniProtKB-SubCell"/>
</dbReference>
<dbReference type="GO" id="GO:0044423">
    <property type="term" value="C:virion component"/>
    <property type="evidence" value="ECO:0007669"/>
    <property type="project" value="UniProtKB-UniRule"/>
</dbReference>
<dbReference type="GO" id="GO:0039675">
    <property type="term" value="P:exit of virus from host cell nucleus through nuclear pore"/>
    <property type="evidence" value="ECO:0007669"/>
    <property type="project" value="UniProtKB-UniRule"/>
</dbReference>
<dbReference type="Gene3D" id="1.10.287.230">
    <property type="match status" value="1"/>
</dbReference>
<dbReference type="Gene3D" id="1.10.287.10">
    <property type="entry name" value="S15/NS1, RNA-binding"/>
    <property type="match status" value="1"/>
</dbReference>
<dbReference type="HAMAP" id="MF_04067">
    <property type="entry name" value="INFV_NEP"/>
    <property type="match status" value="1"/>
</dbReference>
<dbReference type="InterPro" id="IPR000968">
    <property type="entry name" value="Flu_NS2"/>
</dbReference>
<dbReference type="Pfam" id="PF00601">
    <property type="entry name" value="Flu_NS2"/>
    <property type="match status" value="1"/>
</dbReference>
<dbReference type="SUPFAM" id="SSF101156">
    <property type="entry name" value="Nonstructural protein ns2, Nep, M1-binding domain"/>
    <property type="match status" value="1"/>
</dbReference>
<organism>
    <name type="scientific">Influenza A virus (strain A/Udorn/307/1972 H3N2)</name>
    <dbReference type="NCBI Taxonomy" id="381517"/>
    <lineage>
        <taxon>Viruses</taxon>
        <taxon>Riboviria</taxon>
        <taxon>Orthornavirae</taxon>
        <taxon>Negarnaviricota</taxon>
        <taxon>Polyploviricotina</taxon>
        <taxon>Insthoviricetes</taxon>
        <taxon>Articulavirales</taxon>
        <taxon>Orthomyxoviridae</taxon>
        <taxon>Alphainfluenzavirus</taxon>
        <taxon>Alphainfluenzavirus influenzae</taxon>
        <taxon>Influenza A virus</taxon>
    </lineage>
</organism>
<protein>
    <recommendedName>
        <fullName evidence="1">Nuclear export protein</fullName>
        <shortName evidence="1">NEP</shortName>
    </recommendedName>
    <alternativeName>
        <fullName evidence="1">Non-structural protein 2</fullName>
        <shortName evidence="1">NS2</shortName>
    </alternativeName>
</protein>
<feature type="chain" id="PRO_0000079011" description="Nuclear export protein">
    <location>
        <begin position="1"/>
        <end position="121"/>
    </location>
</feature>
<feature type="short sequence motif" description="Nuclear export signal" evidence="1">
    <location>
        <begin position="12"/>
        <end position="21"/>
    </location>
</feature>
<feature type="short sequence motif" description="Nuclear export signal" evidence="1">
    <location>
        <begin position="85"/>
        <end position="94"/>
    </location>
</feature>
<reference key="1">
    <citation type="journal article" date="1980" name="Cell">
        <title>Sequence of interrupted and uninterrupted mRNAs and cloned DNA coding for the two overlapping nonstructural proteins of influenza virus.</title>
        <authorList>
            <person name="Lamb R.A."/>
            <person name="Lai C.-J."/>
        </authorList>
    </citation>
    <scope>NUCLEOTIDE SEQUENCE [GENOMIC RNA]</scope>
</reference>
<reference key="2">
    <citation type="submission" date="2006-04" db="EMBL/GenBank/DDBJ databases">
        <title>Complete genome sequencing and analysis of selected influenza virus vaccine strains spanning six decades (1933-1999).</title>
        <authorList>
            <person name="Mbawuike I.N."/>
            <person name="Zhang Y."/>
            <person name="Yamada R.E."/>
            <person name="Nino D."/>
            <person name="Bui H.-H."/>
            <person name="Sette A."/>
            <person name="Couch R.B."/>
        </authorList>
    </citation>
    <scope>NUCLEOTIDE SEQUENCE [GENOMIC RNA]</scope>
</reference>
<evidence type="ECO:0000255" key="1">
    <source>
        <dbReference type="HAMAP-Rule" id="MF_04067"/>
    </source>
</evidence>
<accession>P69258</accession>
<accession>P03503</accession>
<accession>P03507</accession>
<accession>Q1K9D6</accession>
<name>NEP_I72A2</name>
<sequence length="121" mass="14365">MDSNTVSSFQDILLRMSKMQLGSSSEDLNGMITQFESLKLYRDSLGEAVMRMGDLHLLQNRNGKWREQLGQKFEEIRWLIEEVRHRLKTTENSFEQITFMQALQLLFEVEQEIRTFSFQLI</sequence>
<proteinExistence type="inferred from homology"/>
<organismHost>
    <name type="scientific">Aves</name>
    <dbReference type="NCBI Taxonomy" id="8782"/>
</organismHost>
<organismHost>
    <name type="scientific">Cetacea</name>
    <name type="common">whales</name>
    <dbReference type="NCBI Taxonomy" id="9721"/>
</organismHost>
<organismHost>
    <name type="scientific">Homo sapiens</name>
    <name type="common">Human</name>
    <dbReference type="NCBI Taxonomy" id="9606"/>
</organismHost>
<organismHost>
    <name type="scientific">Phocidae</name>
    <name type="common">true seals</name>
    <dbReference type="NCBI Taxonomy" id="9709"/>
</organismHost>
<organismHost>
    <name type="scientific">Sus scrofa</name>
    <name type="common">Pig</name>
    <dbReference type="NCBI Taxonomy" id="9823"/>
</organismHost>
<gene>
    <name evidence="1" type="primary">NS</name>
</gene>
<comment type="function">
    <text evidence="1">Mediates the nuclear export of encapsidated genomic RNAs (ribonucleoproteins, RNPs). Acts as an adapter between viral RNPs complexes and the nuclear export machinery of the cell. Possesses no intrinsic RNA-binding activity, but includes a C-terminal M1-binding domain. This domain is believed to allow recognition of RNPs bound to the protein M1. Since protein M1 is not available in large quantities before late stages of infection, such an indirect recognition mechanism probably ensures that genomic RNPs are not exported from the host nucleus until sufficient quantities of viral mRNA and progeny genomic RNA have been synthesized. Furthermore, the RNPs enter the host cytoplasm only when associated with the M1 protein that is necessary to guide them to the plasma membrane. May down-regulate viral RNA synthesis when overproduced.</text>
</comment>
<comment type="subunit">
    <text evidence="1">Interacts with protein M1. May interact with host nucleoporin RAB/HRB and exportin XPO1/CRM1.</text>
</comment>
<comment type="subcellular location">
    <subcellularLocation>
        <location evidence="1">Virion</location>
    </subcellularLocation>
    <subcellularLocation>
        <location evidence="1">Host nucleus</location>
    </subcellularLocation>
</comment>
<comment type="alternative products">
    <event type="alternative splicing"/>
    <isoform>
        <id>P69258-1</id>
        <name>NEP</name>
        <name>NS2</name>
        <sequence type="displayed"/>
    </isoform>
    <isoform>
        <id>P03495-1</id>
        <name>NS1</name>
        <sequence type="external"/>
    </isoform>
</comment>
<comment type="miscellaneous">
    <text>Average number present in a viral particle is estimated to be 130-200 molecules.</text>
</comment>
<comment type="similarity">
    <text evidence="1">Belongs to the influenza viruses NEP family.</text>
</comment>
<keyword id="KW-0025">Alternative splicing</keyword>
<keyword id="KW-1048">Host nucleus</keyword>
<keyword id="KW-0945">Host-virus interaction</keyword>
<keyword id="KW-0813">Transport</keyword>
<keyword id="KW-0946">Virion</keyword>